<reference key="1">
    <citation type="journal article" date="2007" name="J. Biol. Chem.">
        <title>Identification of CLEC12B, an inhibitory receptor on myeloid cells.</title>
        <authorList>
            <person name="Hoffmann S.C."/>
            <person name="Schellack C."/>
            <person name="Textor S."/>
            <person name="Konold S."/>
            <person name="Schmitz D."/>
            <person name="Cerwenka A."/>
            <person name="Pflanz S."/>
            <person name="Watzl C."/>
        </authorList>
    </citation>
    <scope>NUCLEOTIDE SEQUENCE [MRNA] (ISOFORM 1)</scope>
    <scope>FUNCTION</scope>
    <scope>SUBCELLULAR LOCATION</scope>
    <scope>SUBUNIT</scope>
    <scope>INTERACTION WITH PTPN6 AND PTPN11</scope>
    <scope>TISSUE SPECIFICITY</scope>
    <scope>INDUCTION</scope>
    <scope>DOMAIN</scope>
    <scope>MUTAGENESIS OF TYR-7</scope>
    <scope>PHOSPHORYLATION AT TYR-7</scope>
    <scope>ALTERNATIVE SPLICING</scope>
</reference>
<reference key="2">
    <citation type="journal article" date="2003" name="Genome Res.">
        <title>The secreted protein discovery initiative (SPDI), a large-scale effort to identify novel human secreted and transmembrane proteins: a bioinformatics assessment.</title>
        <authorList>
            <person name="Clark H.F."/>
            <person name="Gurney A.L."/>
            <person name="Abaya E."/>
            <person name="Baker K."/>
            <person name="Baldwin D.T."/>
            <person name="Brush J."/>
            <person name="Chen J."/>
            <person name="Chow B."/>
            <person name="Chui C."/>
            <person name="Crowley C."/>
            <person name="Currell B."/>
            <person name="Deuel B."/>
            <person name="Dowd P."/>
            <person name="Eaton D."/>
            <person name="Foster J.S."/>
            <person name="Grimaldi C."/>
            <person name="Gu Q."/>
            <person name="Hass P.E."/>
            <person name="Heldens S."/>
            <person name="Huang A."/>
            <person name="Kim H.S."/>
            <person name="Klimowski L."/>
            <person name="Jin Y."/>
            <person name="Johnson S."/>
            <person name="Lee J."/>
            <person name="Lewis L."/>
            <person name="Liao D."/>
            <person name="Mark M.R."/>
            <person name="Robbie E."/>
            <person name="Sanchez C."/>
            <person name="Schoenfeld J."/>
            <person name="Seshagiri S."/>
            <person name="Simmons L."/>
            <person name="Singh J."/>
            <person name="Smith V."/>
            <person name="Stinson J."/>
            <person name="Vagts A."/>
            <person name="Vandlen R.L."/>
            <person name="Watanabe C."/>
            <person name="Wieand D."/>
            <person name="Woods K."/>
            <person name="Xie M.-H."/>
            <person name="Yansura D.G."/>
            <person name="Yi S."/>
            <person name="Yu G."/>
            <person name="Yuan J."/>
            <person name="Zhang M."/>
            <person name="Zhang Z."/>
            <person name="Goddard A.D."/>
            <person name="Wood W.I."/>
            <person name="Godowski P.J."/>
            <person name="Gray A.M."/>
        </authorList>
    </citation>
    <scope>NUCLEOTIDE SEQUENCE [LARGE SCALE MRNA] (ISOFORM 2)</scope>
    <scope>VARIANT LEU-116</scope>
</reference>
<reference key="3">
    <citation type="journal article" date="2004" name="Nat. Genet.">
        <title>Complete sequencing and characterization of 21,243 full-length human cDNAs.</title>
        <authorList>
            <person name="Ota T."/>
            <person name="Suzuki Y."/>
            <person name="Nishikawa T."/>
            <person name="Otsuki T."/>
            <person name="Sugiyama T."/>
            <person name="Irie R."/>
            <person name="Wakamatsu A."/>
            <person name="Hayashi K."/>
            <person name="Sato H."/>
            <person name="Nagai K."/>
            <person name="Kimura K."/>
            <person name="Makita H."/>
            <person name="Sekine M."/>
            <person name="Obayashi M."/>
            <person name="Nishi T."/>
            <person name="Shibahara T."/>
            <person name="Tanaka T."/>
            <person name="Ishii S."/>
            <person name="Yamamoto J."/>
            <person name="Saito K."/>
            <person name="Kawai Y."/>
            <person name="Isono Y."/>
            <person name="Nakamura Y."/>
            <person name="Nagahari K."/>
            <person name="Murakami K."/>
            <person name="Yasuda T."/>
            <person name="Iwayanagi T."/>
            <person name="Wagatsuma M."/>
            <person name="Shiratori A."/>
            <person name="Sudo H."/>
            <person name="Hosoiri T."/>
            <person name="Kaku Y."/>
            <person name="Kodaira H."/>
            <person name="Kondo H."/>
            <person name="Sugawara M."/>
            <person name="Takahashi M."/>
            <person name="Kanda K."/>
            <person name="Yokoi T."/>
            <person name="Furuya T."/>
            <person name="Kikkawa E."/>
            <person name="Omura Y."/>
            <person name="Abe K."/>
            <person name="Kamihara K."/>
            <person name="Katsuta N."/>
            <person name="Sato K."/>
            <person name="Tanikawa M."/>
            <person name="Yamazaki M."/>
            <person name="Ninomiya K."/>
            <person name="Ishibashi T."/>
            <person name="Yamashita H."/>
            <person name="Murakawa K."/>
            <person name="Fujimori K."/>
            <person name="Tanai H."/>
            <person name="Kimata M."/>
            <person name="Watanabe M."/>
            <person name="Hiraoka S."/>
            <person name="Chiba Y."/>
            <person name="Ishida S."/>
            <person name="Ono Y."/>
            <person name="Takiguchi S."/>
            <person name="Watanabe S."/>
            <person name="Yosida M."/>
            <person name="Hotuta T."/>
            <person name="Kusano J."/>
            <person name="Kanehori K."/>
            <person name="Takahashi-Fujii A."/>
            <person name="Hara H."/>
            <person name="Tanase T.-O."/>
            <person name="Nomura Y."/>
            <person name="Togiya S."/>
            <person name="Komai F."/>
            <person name="Hara R."/>
            <person name="Takeuchi K."/>
            <person name="Arita M."/>
            <person name="Imose N."/>
            <person name="Musashino K."/>
            <person name="Yuuki H."/>
            <person name="Oshima A."/>
            <person name="Sasaki N."/>
            <person name="Aotsuka S."/>
            <person name="Yoshikawa Y."/>
            <person name="Matsunawa H."/>
            <person name="Ichihara T."/>
            <person name="Shiohata N."/>
            <person name="Sano S."/>
            <person name="Moriya S."/>
            <person name="Momiyama H."/>
            <person name="Satoh N."/>
            <person name="Takami S."/>
            <person name="Terashima Y."/>
            <person name="Suzuki O."/>
            <person name="Nakagawa S."/>
            <person name="Senoh A."/>
            <person name="Mizoguchi H."/>
            <person name="Goto Y."/>
            <person name="Shimizu F."/>
            <person name="Wakebe H."/>
            <person name="Hishigaki H."/>
            <person name="Watanabe T."/>
            <person name="Sugiyama A."/>
            <person name="Takemoto M."/>
            <person name="Kawakami B."/>
            <person name="Yamazaki M."/>
            <person name="Watanabe K."/>
            <person name="Kumagai A."/>
            <person name="Itakura S."/>
            <person name="Fukuzumi Y."/>
            <person name="Fujimori Y."/>
            <person name="Komiyama M."/>
            <person name="Tashiro H."/>
            <person name="Tanigami A."/>
            <person name="Fujiwara T."/>
            <person name="Ono T."/>
            <person name="Yamada K."/>
            <person name="Fujii Y."/>
            <person name="Ozaki K."/>
            <person name="Hirao M."/>
            <person name="Ohmori Y."/>
            <person name="Kawabata A."/>
            <person name="Hikiji T."/>
            <person name="Kobatake N."/>
            <person name="Inagaki H."/>
            <person name="Ikema Y."/>
            <person name="Okamoto S."/>
            <person name="Okitani R."/>
            <person name="Kawakami T."/>
            <person name="Noguchi S."/>
            <person name="Itoh T."/>
            <person name="Shigeta K."/>
            <person name="Senba T."/>
            <person name="Matsumura K."/>
            <person name="Nakajima Y."/>
            <person name="Mizuno T."/>
            <person name="Morinaga M."/>
            <person name="Sasaki M."/>
            <person name="Togashi T."/>
            <person name="Oyama M."/>
            <person name="Hata H."/>
            <person name="Watanabe M."/>
            <person name="Komatsu T."/>
            <person name="Mizushima-Sugano J."/>
            <person name="Satoh T."/>
            <person name="Shirai Y."/>
            <person name="Takahashi Y."/>
            <person name="Nakagawa K."/>
            <person name="Okumura K."/>
            <person name="Nagase T."/>
            <person name="Nomura N."/>
            <person name="Kikuchi H."/>
            <person name="Masuho Y."/>
            <person name="Yamashita R."/>
            <person name="Nakai K."/>
            <person name="Yada T."/>
            <person name="Nakamura Y."/>
            <person name="Ohara O."/>
            <person name="Isogai T."/>
            <person name="Sugano S."/>
        </authorList>
    </citation>
    <scope>NUCLEOTIDE SEQUENCE [LARGE SCALE MRNA] (ISOFORM 2)</scope>
    <scope>VARIANTS ASN-6 AND LEU-116</scope>
    <source>
        <tissue>Testis</tissue>
    </source>
</reference>
<reference key="4">
    <citation type="submission" date="2005-07" db="EMBL/GenBank/DDBJ databases">
        <authorList>
            <person name="Mural R.J."/>
            <person name="Istrail S."/>
            <person name="Sutton G.G."/>
            <person name="Florea L."/>
            <person name="Halpern A.L."/>
            <person name="Mobarry C.M."/>
            <person name="Lippert R."/>
            <person name="Walenz B."/>
            <person name="Shatkay H."/>
            <person name="Dew I."/>
            <person name="Miller J.R."/>
            <person name="Flanigan M.J."/>
            <person name="Edwards N.J."/>
            <person name="Bolanos R."/>
            <person name="Fasulo D."/>
            <person name="Halldorsson B.V."/>
            <person name="Hannenhalli S."/>
            <person name="Turner R."/>
            <person name="Yooseph S."/>
            <person name="Lu F."/>
            <person name="Nusskern D.R."/>
            <person name="Shue B.C."/>
            <person name="Zheng X.H."/>
            <person name="Zhong F."/>
            <person name="Delcher A.L."/>
            <person name="Huson D.H."/>
            <person name="Kravitz S.A."/>
            <person name="Mouchard L."/>
            <person name="Reinert K."/>
            <person name="Remington K.A."/>
            <person name="Clark A.G."/>
            <person name="Waterman M.S."/>
            <person name="Eichler E.E."/>
            <person name="Adams M.D."/>
            <person name="Hunkapiller M.W."/>
            <person name="Myers E.W."/>
            <person name="Venter J.C."/>
        </authorList>
    </citation>
    <scope>NUCLEOTIDE SEQUENCE [LARGE SCALE GENOMIC DNA]</scope>
</reference>
<reference key="5">
    <citation type="journal article" date="2022" name="J. Invest. Dermatol.">
        <title>CLEC12B Decreases Melanoma Proliferation by Repressing Signal Transducer and Activator of Transcription 3.</title>
        <authorList>
            <person name="Montaudie H."/>
            <person name="Sormani L."/>
            <person name="Dadone-Montaudie B."/>
            <person name="Heim M."/>
            <person name="Cardot-Leccia N."/>
            <person name="Tulic M.K."/>
            <person name="Beranger G."/>
            <person name="Gay A.S."/>
            <person name="Debayle D."/>
            <person name="Cheli Y."/>
            <person name="Raymond J.H."/>
            <person name="Sohier P."/>
            <person name="Petit V."/>
            <person name="Rocchi S."/>
            <person name="Gesbert F."/>
            <person name="Larue L."/>
            <person name="Passeron T."/>
        </authorList>
    </citation>
    <scope>FUNCTION</scope>
    <scope>TISSUE SPECIFICITY</scope>
    <scope>PTM</scope>
    <scope>INTERACTION WITH PTPN11</scope>
    <scope>DOMAIN</scope>
    <scope>MUTAGENESIS OF TYR-7</scope>
</reference>
<sequence length="276" mass="31616">MSEEVTYATLTFQDSAGARNNRDGNNLRKRGHPAPSPIWRHAALGLVTLCLMLLIGLVTLGMMFLQISNDINSDSEKLSQLQKTIQQQQDNLSQQLGNSNNLSMEEEFLKSQISSVLKRQEQMAIKLCQELIIHTSDHRCNPCPKMWQWYQNSCYYFTTNEEKTWANSRKDCIDKNSTLVKIDSLEEKDFLMSQPLLMFSFFWLGLSWDSSGRSWFWEDGSVPSPSLFSTKELDQINGSKGCAYFQKGNIYISRCSAEIFWICEKTAAPVKTEDLD</sequence>
<name>CL12B_HUMAN</name>
<protein>
    <recommendedName>
        <fullName>C-type lectin domain family 12 member B</fullName>
    </recommendedName>
    <alternativeName>
        <fullName evidence="9">Macrophage antigen H</fullName>
    </alternativeName>
</protein>
<proteinExistence type="evidence at protein level"/>
<accession>Q2HXU8</accession>
<accession>Q6UWF2</accession>
<accession>Q6ZRG0</accession>
<feature type="chain" id="PRO_0000313581" description="C-type lectin domain family 12 member B">
    <location>
        <begin position="1"/>
        <end position="276"/>
    </location>
</feature>
<feature type="topological domain" description="Cytoplasmic" evidence="1">
    <location>
        <begin position="1"/>
        <end position="43"/>
    </location>
</feature>
<feature type="transmembrane region" description="Helical; Signal-anchor for type II membrane protein" evidence="1">
    <location>
        <begin position="44"/>
        <end position="64"/>
    </location>
</feature>
<feature type="topological domain" description="Extracellular" evidence="1">
    <location>
        <begin position="65"/>
        <end position="276"/>
    </location>
</feature>
<feature type="domain" description="C-type lectin" evidence="2">
    <location>
        <begin position="150"/>
        <end position="264"/>
    </location>
</feature>
<feature type="short sequence motif" description="ITIM motif" evidence="9">
    <location>
        <begin position="5"/>
        <end position="10"/>
    </location>
</feature>
<feature type="modified residue" description="Phosphotyrosine" evidence="5">
    <location>
        <position position="7"/>
    </location>
</feature>
<feature type="glycosylation site" description="N-linked (GlcNAc...) asparagine" evidence="1">
    <location>
        <position position="91"/>
    </location>
</feature>
<feature type="glycosylation site" description="N-linked (GlcNAc...) asparagine" evidence="1">
    <location>
        <position position="176"/>
    </location>
</feature>
<feature type="glycosylation site" description="N-linked (GlcNAc...) asparagine" evidence="1">
    <location>
        <position position="237"/>
    </location>
</feature>
<feature type="disulfide bond" evidence="2">
    <location>
        <begin position="172"/>
        <end position="263"/>
    </location>
</feature>
<feature type="disulfide bond" evidence="2">
    <location>
        <begin position="242"/>
        <end position="255"/>
    </location>
</feature>
<feature type="splice variant" id="VSP_030034" description="In isoform 2." evidence="7 8">
    <original>FSTKE</original>
    <variation>YVSNY</variation>
    <location>
        <begin position="228"/>
        <end position="232"/>
    </location>
</feature>
<feature type="splice variant" id="VSP_030035" description="In isoform 2." evidence="7 8">
    <location>
        <begin position="233"/>
        <end position="276"/>
    </location>
</feature>
<feature type="sequence variant" id="VAR_037670" description="In dbSNP:rs1359082." evidence="4">
    <original>T</original>
    <variation>N</variation>
    <location>
        <position position="6"/>
    </location>
</feature>
<feature type="sequence variant" id="VAR_037671" description="In dbSNP:rs637790." evidence="3 4">
    <original>V</original>
    <variation>L</variation>
    <location>
        <position position="116"/>
    </location>
</feature>
<feature type="mutagenesis site" description="Abolishes tyrosine phosphorylation and inhibitory receptor activity. Abolishes interaction with PTPN6 and PTPN11. Abolishes protection against natural killer cell-mediated cytotoxicity." evidence="5 6">
    <original>Y</original>
    <variation>F</variation>
    <location>
        <position position="7"/>
    </location>
</feature>
<dbReference type="EMBL" id="DQ368812">
    <property type="protein sequence ID" value="ABC96323.1"/>
    <property type="molecule type" value="mRNA"/>
</dbReference>
<dbReference type="EMBL" id="AY358810">
    <property type="protein sequence ID" value="AAQ89170.1"/>
    <property type="molecule type" value="mRNA"/>
</dbReference>
<dbReference type="EMBL" id="AK128243">
    <property type="protein sequence ID" value="BAC87350.1"/>
    <property type="molecule type" value="mRNA"/>
</dbReference>
<dbReference type="EMBL" id="CH471094">
    <property type="protein sequence ID" value="EAW96136.1"/>
    <property type="molecule type" value="Genomic_DNA"/>
</dbReference>
<dbReference type="CCDS" id="CCDS44830.1">
    <molecule id="Q2HXU8-1"/>
</dbReference>
<dbReference type="CCDS" id="CCDS8610.1">
    <molecule id="Q2HXU8-2"/>
</dbReference>
<dbReference type="RefSeq" id="NP_001123470.1">
    <molecule id="Q2HXU8-1"/>
    <property type="nucleotide sequence ID" value="NM_001129998.3"/>
</dbReference>
<dbReference type="RefSeq" id="NP_995324.2">
    <molecule id="Q2HXU8-2"/>
    <property type="nucleotide sequence ID" value="NM_205852.3"/>
</dbReference>
<dbReference type="SMR" id="Q2HXU8"/>
<dbReference type="BioGRID" id="132463">
    <property type="interactions" value="217"/>
</dbReference>
<dbReference type="FunCoup" id="Q2HXU8">
    <property type="interactions" value="5"/>
</dbReference>
<dbReference type="IntAct" id="Q2HXU8">
    <property type="interactions" value="183"/>
</dbReference>
<dbReference type="STRING" id="9606.ENSP00000344563"/>
<dbReference type="GlyCosmos" id="Q2HXU8">
    <property type="glycosylation" value="3 sites, No reported glycans"/>
</dbReference>
<dbReference type="GlyGen" id="Q2HXU8">
    <property type="glycosylation" value="3 sites"/>
</dbReference>
<dbReference type="iPTMnet" id="Q2HXU8"/>
<dbReference type="PhosphoSitePlus" id="Q2HXU8"/>
<dbReference type="BioMuta" id="CLEC12B"/>
<dbReference type="DMDM" id="121941174"/>
<dbReference type="jPOST" id="Q2HXU8"/>
<dbReference type="MassIVE" id="Q2HXU8"/>
<dbReference type="PaxDb" id="9606-ENSP00000344563"/>
<dbReference type="PeptideAtlas" id="Q2HXU8"/>
<dbReference type="Antibodypedia" id="57539">
    <property type="antibodies" value="69 antibodies from 18 providers"/>
</dbReference>
<dbReference type="DNASU" id="387837"/>
<dbReference type="Ensembl" id="ENST00000338896.11">
    <molecule id="Q2HXU8-1"/>
    <property type="protein sequence ID" value="ENSP00000344563.5"/>
    <property type="gene ID" value="ENSG00000256660.7"/>
</dbReference>
<dbReference type="Ensembl" id="ENST00000396502.5">
    <molecule id="Q2HXU8-2"/>
    <property type="protein sequence ID" value="ENSP00000379759.1"/>
    <property type="gene ID" value="ENSG00000256660.7"/>
</dbReference>
<dbReference type="Ensembl" id="ENST00000544853.5">
    <molecule id="Q2HXU8-2"/>
    <property type="protein sequence ID" value="ENSP00000439561.1"/>
    <property type="gene ID" value="ENSG00000256660.7"/>
</dbReference>
<dbReference type="GeneID" id="387837"/>
<dbReference type="KEGG" id="hsa:387837"/>
<dbReference type="MANE-Select" id="ENST00000338896.11">
    <property type="protein sequence ID" value="ENSP00000344563.5"/>
    <property type="RefSeq nucleotide sequence ID" value="NM_001129998.3"/>
    <property type="RefSeq protein sequence ID" value="NP_001123470.1"/>
</dbReference>
<dbReference type="UCSC" id="uc001qwx.3">
    <molecule id="Q2HXU8-1"/>
    <property type="organism name" value="human"/>
</dbReference>
<dbReference type="AGR" id="HGNC:31966"/>
<dbReference type="CTD" id="387837"/>
<dbReference type="DisGeNET" id="387837"/>
<dbReference type="GeneCards" id="CLEC12B"/>
<dbReference type="HGNC" id="HGNC:31966">
    <property type="gene designation" value="CLEC12B"/>
</dbReference>
<dbReference type="HPA" id="ENSG00000256660">
    <property type="expression patterns" value="Group enriched (bone marrow, skin, testis)"/>
</dbReference>
<dbReference type="MIM" id="617573">
    <property type="type" value="gene"/>
</dbReference>
<dbReference type="neXtProt" id="NX_Q2HXU8"/>
<dbReference type="OpenTargets" id="ENSG00000256660"/>
<dbReference type="PharmGKB" id="PA162382325"/>
<dbReference type="VEuPathDB" id="HostDB:ENSG00000256660"/>
<dbReference type="eggNOG" id="KOG4297">
    <property type="taxonomic scope" value="Eukaryota"/>
</dbReference>
<dbReference type="GeneTree" id="ENSGT00940000162751"/>
<dbReference type="HOGENOM" id="CLU_049894_5_1_1"/>
<dbReference type="InParanoid" id="Q2HXU8"/>
<dbReference type="OMA" id="SAEIFWI"/>
<dbReference type="OrthoDB" id="6337382at2759"/>
<dbReference type="PAN-GO" id="Q2HXU8">
    <property type="GO annotations" value="4 GO annotations based on evolutionary models"/>
</dbReference>
<dbReference type="PhylomeDB" id="Q2HXU8"/>
<dbReference type="TreeFam" id="TF336674"/>
<dbReference type="PathwayCommons" id="Q2HXU8"/>
<dbReference type="SignaLink" id="Q2HXU8"/>
<dbReference type="BioGRID-ORCS" id="387837">
    <property type="hits" value="11 hits in 1151 CRISPR screens"/>
</dbReference>
<dbReference type="ChiTaRS" id="CLEC12B">
    <property type="organism name" value="human"/>
</dbReference>
<dbReference type="GenomeRNAi" id="387837"/>
<dbReference type="Pharos" id="Q2HXU8">
    <property type="development level" value="Tbio"/>
</dbReference>
<dbReference type="PRO" id="PR:Q2HXU8"/>
<dbReference type="Proteomes" id="UP000005640">
    <property type="component" value="Chromosome 12"/>
</dbReference>
<dbReference type="RNAct" id="Q2HXU8">
    <property type="molecule type" value="protein"/>
</dbReference>
<dbReference type="Bgee" id="ENSG00000256660">
    <property type="expression patterns" value="Expressed in monocyte and 86 other cell types or tissues"/>
</dbReference>
<dbReference type="ExpressionAtlas" id="Q2HXU8">
    <property type="expression patterns" value="baseline and differential"/>
</dbReference>
<dbReference type="GO" id="GO:0009897">
    <property type="term" value="C:external side of plasma membrane"/>
    <property type="evidence" value="ECO:0000315"/>
    <property type="project" value="UniProtKB"/>
</dbReference>
<dbReference type="GO" id="GO:0032991">
    <property type="term" value="C:protein-containing complex"/>
    <property type="evidence" value="ECO:0000315"/>
    <property type="project" value="UniProtKB"/>
</dbReference>
<dbReference type="GO" id="GO:0030246">
    <property type="term" value="F:carbohydrate binding"/>
    <property type="evidence" value="ECO:0007669"/>
    <property type="project" value="UniProtKB-KW"/>
</dbReference>
<dbReference type="GO" id="GO:0019903">
    <property type="term" value="F:protein phosphatase binding"/>
    <property type="evidence" value="ECO:0000314"/>
    <property type="project" value="UniProtKB"/>
</dbReference>
<dbReference type="GO" id="GO:0030547">
    <property type="term" value="F:signaling receptor inhibitor activity"/>
    <property type="evidence" value="ECO:0000315"/>
    <property type="project" value="UniProtKB"/>
</dbReference>
<dbReference type="GO" id="GO:0097325">
    <property type="term" value="P:melanocyte proliferation"/>
    <property type="evidence" value="ECO:0000314"/>
    <property type="project" value="UniProtKB"/>
</dbReference>
<dbReference type="GO" id="GO:0002769">
    <property type="term" value="P:natural killer cell inhibitory signaling pathway"/>
    <property type="evidence" value="ECO:0000315"/>
    <property type="project" value="UniProtKB"/>
</dbReference>
<dbReference type="GO" id="GO:0045953">
    <property type="term" value="P:negative regulation of natural killer cell mediated cytotoxicity"/>
    <property type="evidence" value="ECO:0000315"/>
    <property type="project" value="UniProtKB"/>
</dbReference>
<dbReference type="GO" id="GO:1904893">
    <property type="term" value="P:negative regulation of receptor signaling pathway via STAT"/>
    <property type="evidence" value="ECO:0000314"/>
    <property type="project" value="UniProtKB"/>
</dbReference>
<dbReference type="GO" id="GO:2000272">
    <property type="term" value="P:negative regulation of signaling receptor activity"/>
    <property type="evidence" value="ECO:0000315"/>
    <property type="project" value="UniProtKB"/>
</dbReference>
<dbReference type="CDD" id="cd03593">
    <property type="entry name" value="CLECT_NK_receptors_like"/>
    <property type="match status" value="1"/>
</dbReference>
<dbReference type="FunFam" id="3.10.100.10:FF:000101">
    <property type="entry name" value="C-type lectin domain family 12 member B"/>
    <property type="match status" value="1"/>
</dbReference>
<dbReference type="Gene3D" id="3.10.100.10">
    <property type="entry name" value="Mannose-Binding Protein A, subunit A"/>
    <property type="match status" value="1"/>
</dbReference>
<dbReference type="InterPro" id="IPR001304">
    <property type="entry name" value="C-type_lectin-like"/>
</dbReference>
<dbReference type="InterPro" id="IPR016186">
    <property type="entry name" value="C-type_lectin-like/link_sf"/>
</dbReference>
<dbReference type="InterPro" id="IPR042916">
    <property type="entry name" value="CLEC12A/B"/>
</dbReference>
<dbReference type="InterPro" id="IPR016187">
    <property type="entry name" value="CTDL_fold"/>
</dbReference>
<dbReference type="InterPro" id="IPR013600">
    <property type="entry name" value="Ly49_N"/>
</dbReference>
<dbReference type="InterPro" id="IPR033992">
    <property type="entry name" value="NKR-like_CTLD"/>
</dbReference>
<dbReference type="PANTHER" id="PTHR47647">
    <property type="entry name" value="C-TYPE LECTIN DOMAIN FAMILY 12 MEMBER B"/>
    <property type="match status" value="1"/>
</dbReference>
<dbReference type="PANTHER" id="PTHR47647:SF1">
    <property type="entry name" value="C-TYPE LECTIN DOMAIN FAMILY 12 MEMBER B"/>
    <property type="match status" value="1"/>
</dbReference>
<dbReference type="Pfam" id="PF00059">
    <property type="entry name" value="Lectin_C"/>
    <property type="match status" value="1"/>
</dbReference>
<dbReference type="Pfam" id="PF08391">
    <property type="entry name" value="Ly49"/>
    <property type="match status" value="1"/>
</dbReference>
<dbReference type="SMART" id="SM00034">
    <property type="entry name" value="CLECT"/>
    <property type="match status" value="1"/>
</dbReference>
<dbReference type="SUPFAM" id="SSF56436">
    <property type="entry name" value="C-type lectin-like"/>
    <property type="match status" value="1"/>
</dbReference>
<dbReference type="PROSITE" id="PS50041">
    <property type="entry name" value="C_TYPE_LECTIN_2"/>
    <property type="match status" value="1"/>
</dbReference>
<evidence type="ECO:0000255" key="1"/>
<evidence type="ECO:0000255" key="2">
    <source>
        <dbReference type="PROSITE-ProRule" id="PRU00040"/>
    </source>
</evidence>
<evidence type="ECO:0000269" key="3">
    <source>
    </source>
</evidence>
<evidence type="ECO:0000269" key="4">
    <source>
    </source>
</evidence>
<evidence type="ECO:0000269" key="5">
    <source>
    </source>
</evidence>
<evidence type="ECO:0000269" key="6">
    <source>
    </source>
</evidence>
<evidence type="ECO:0000303" key="7">
    <source>
    </source>
</evidence>
<evidence type="ECO:0000303" key="8">
    <source>
    </source>
</evidence>
<evidence type="ECO:0000303" key="9">
    <source>
    </source>
</evidence>
<evidence type="ECO:0000303" key="10">
    <source>
    </source>
</evidence>
<evidence type="ECO:0000312" key="11">
    <source>
        <dbReference type="HGNC" id="HGNC:31966"/>
    </source>
</evidence>
<keyword id="KW-0025">Alternative splicing</keyword>
<keyword id="KW-1003">Cell membrane</keyword>
<keyword id="KW-1015">Disulfide bond</keyword>
<keyword id="KW-0325">Glycoprotein</keyword>
<keyword id="KW-0430">Lectin</keyword>
<keyword id="KW-0472">Membrane</keyword>
<keyword id="KW-0597">Phosphoprotein</keyword>
<keyword id="KW-0675">Receptor</keyword>
<keyword id="KW-1185">Reference proteome</keyword>
<keyword id="KW-0735">Signal-anchor</keyword>
<keyword id="KW-0812">Transmembrane</keyword>
<keyword id="KW-1133">Transmembrane helix</keyword>
<comment type="function">
    <text evidence="5 6">Inhibitory receptor postulated to negatively regulate immune and non-immune functions (PubMed:17562706, PubMed:34310951). Upon phosphorylation, recruits SH2 domain-containing PTPN6 and PTPN11 phosphatases to its ITIM motif and antagonizes activation signals (PubMed:17562706, PubMed:34310951). Although it inhibits KLRK1/NKG2D-mediated signaling, it does not bind known ligands of KLRK1/NKG2D and therefore is not its inhibitory counterpart (PubMed:17562706). May limit activation of myeloid cell subsets in response to infection or tissue inflammation (PubMed:17562706). May protect target cells against natural killer cell-mediated lysis (PubMed:17562706). May negatively regulate cell cycle and differentiation of melanocytes via inactivation of STAT3 (PubMed:34310951).</text>
</comment>
<comment type="subunit">
    <text evidence="5 6">Homodimer. Interacts (via ITIM motif) with PTPN6 (PubMed:17562706). Interacts (via ITIM motif) with PTPN11; this interaction triggers dephosphorylation and activation of PTPN11 (PubMed:17562706, PubMed:34310951).</text>
</comment>
<comment type="interaction">
    <interactant intactId="EBI-12811991">
        <id>Q2HXU8-2</id>
    </interactant>
    <interactant intactId="EBI-12838366">
        <id>Q01638-2</id>
        <label>IL1RL1</label>
    </interactant>
    <organismsDiffer>false</organismsDiffer>
    <experiments>3</experiments>
</comment>
<comment type="interaction">
    <interactant intactId="EBI-12811991">
        <id>Q2HXU8-2</id>
    </interactant>
    <interactant intactId="EBI-10266796">
        <id>Q8N5M9</id>
        <label>JAGN1</label>
    </interactant>
    <organismsDiffer>false</organismsDiffer>
    <experiments>3</experiments>
</comment>
<comment type="interaction">
    <interactant intactId="EBI-12811991">
        <id>Q2HXU8-2</id>
    </interactant>
    <interactant intactId="EBI-12033434">
        <id>Q9UBY5</id>
        <label>LPAR3</label>
    </interactant>
    <organismsDiffer>false</organismsDiffer>
    <experiments>3</experiments>
</comment>
<comment type="interaction">
    <interactant intactId="EBI-12811991">
        <id>Q2HXU8-2</id>
    </interactant>
    <interactant intactId="EBI-10264855">
        <id>Q8N112</id>
        <label>LSMEM2</label>
    </interactant>
    <organismsDiffer>false</organismsDiffer>
    <experiments>3</experiments>
</comment>
<comment type="interaction">
    <interactant intactId="EBI-12811991">
        <id>Q2HXU8-2</id>
    </interactant>
    <interactant intactId="EBI-750078">
        <id>Q13021</id>
        <label>MALL</label>
    </interactant>
    <organismsDiffer>false</organismsDiffer>
    <experiments>3</experiments>
</comment>
<comment type="interaction">
    <interactant intactId="EBI-12811991">
        <id>Q2HXU8-2</id>
    </interactant>
    <interactant intactId="EBI-12807478">
        <id>P35372-10</id>
        <label>OPRM1</label>
    </interactant>
    <organismsDiffer>false</organismsDiffer>
    <experiments>3</experiments>
</comment>
<comment type="interaction">
    <interactant intactId="EBI-12811991">
        <id>Q2HXU8-2</id>
    </interactant>
    <interactant intactId="EBI-3919291">
        <id>Q9Y342</id>
        <label>PLLP</label>
    </interactant>
    <organismsDiffer>false</organismsDiffer>
    <experiments>3</experiments>
</comment>
<comment type="interaction">
    <interactant intactId="EBI-12811991">
        <id>Q2HXU8-2</id>
    </interactant>
    <interactant intactId="EBI-2845982">
        <id>Q01453</id>
        <label>PMP22</label>
    </interactant>
    <organismsDiffer>false</organismsDiffer>
    <experiments>3</experiments>
</comment>
<comment type="interaction">
    <interactant intactId="EBI-12811991">
        <id>Q2HXU8-2</id>
    </interactant>
    <interactant intactId="EBI-2684237">
        <id>O00767</id>
        <label>SCD</label>
    </interactant>
    <organismsDiffer>false</organismsDiffer>
    <experiments>3</experiments>
</comment>
<comment type="interaction">
    <interactant intactId="EBI-12811991">
        <id>Q2HXU8-2</id>
    </interactant>
    <interactant intactId="EBI-8652744">
        <id>Q96IW7</id>
        <label>SEC22A</label>
    </interactant>
    <organismsDiffer>false</organismsDiffer>
    <experiments>3</experiments>
</comment>
<comment type="interaction">
    <interactant intactId="EBI-12811991">
        <id>Q2HXU8-2</id>
    </interactant>
    <interactant intactId="EBI-1055364">
        <id>Q3ZAQ7</id>
        <label>VMA21</label>
    </interactant>
    <organismsDiffer>false</organismsDiffer>
    <experiments>3</experiments>
</comment>
<comment type="subcellular location">
    <subcellularLocation>
        <location evidence="5">Cell membrane</location>
        <topology evidence="1">Single-pass type II membrane protein</topology>
    </subcellularLocation>
</comment>
<comment type="alternative products">
    <event type="alternative splicing"/>
    <isoform>
        <id>Q2HXU8-1</id>
        <name>1</name>
        <sequence type="displayed"/>
    </isoform>
    <isoform>
        <id>Q2HXU8-2</id>
        <name>2</name>
        <sequence type="described" ref="VSP_030034 VSP_030035"/>
    </isoform>
</comment>
<comment type="tissue specificity">
    <text evidence="5 6">Detected in colon, heart, kidney, liver, lung, mammary gland, ovary, spleen and testis (PubMed:17562706). Expressed in melanocytes (at protein level) (PubMed:34310951).</text>
</comment>
<comment type="induction">
    <text evidence="5">Up-regulated upon differentiation of monocytes to macrophages.</text>
</comment>
<comment type="domain">
    <text evidence="5 6">Contains 1 copy of a cytoplasmic motif that is referred to as the immunoreceptor tyrosine-based inhibitor motif (ITIM). This motif is involved in modulation of cellular responses. The phosphorylated ITIM motif can bind the SH2 domain of several SH2-containing phosphatases.</text>
</comment>
<comment type="PTM">
    <text evidence="6">N-glycosylated.</text>
</comment>
<organism>
    <name type="scientific">Homo sapiens</name>
    <name type="common">Human</name>
    <dbReference type="NCBI Taxonomy" id="9606"/>
    <lineage>
        <taxon>Eukaryota</taxon>
        <taxon>Metazoa</taxon>
        <taxon>Chordata</taxon>
        <taxon>Craniata</taxon>
        <taxon>Vertebrata</taxon>
        <taxon>Euteleostomi</taxon>
        <taxon>Mammalia</taxon>
        <taxon>Eutheria</taxon>
        <taxon>Euarchontoglires</taxon>
        <taxon>Primates</taxon>
        <taxon>Haplorrhini</taxon>
        <taxon>Catarrhini</taxon>
        <taxon>Hominidae</taxon>
        <taxon>Homo</taxon>
    </lineage>
</organism>
<gene>
    <name evidence="10 11" type="primary">CLEC12B</name>
    <name type="ORF">UNQ5782/PRO16089</name>
</gene>